<proteinExistence type="evidence at protein level"/>
<name>UP6_HALAI</name>
<feature type="signal peptide" evidence="1">
    <location>
        <begin position="1"/>
        <end position="19"/>
    </location>
</feature>
<feature type="chain" id="PRO_0000399452" description="Uncharacterized protein 6" evidence="1">
    <location>
        <begin position="20"/>
        <end position="209"/>
    </location>
</feature>
<feature type="glycosylation site" description="N-linked (GlcNAc...) asparagine" evidence="1">
    <location>
        <position position="41"/>
    </location>
</feature>
<feature type="glycosylation site" description="N-linked (GlcNAc...) asparagine" evidence="1">
    <location>
        <position position="109"/>
    </location>
</feature>
<comment type="subcellular location">
    <subcellularLocation>
        <location evidence="3">Secreted</location>
    </subcellularLocation>
</comment>
<comment type="tissue specificity">
    <text evidence="3">Component of the acid-soluble organic matrix of prismatic shell layers (at protein level).</text>
</comment>
<dbReference type="EMBL" id="DW986296">
    <property type="status" value="NOT_ANNOTATED_CDS"/>
    <property type="molecule type" value="mRNA"/>
</dbReference>
<dbReference type="GO" id="GO:0005576">
    <property type="term" value="C:extracellular region"/>
    <property type="evidence" value="ECO:0000314"/>
    <property type="project" value="UniProtKB"/>
</dbReference>
<reference evidence="4" key="1">
    <citation type="journal article" date="2006" name="BMC Biol.">
        <title>A rapidly evolving secretome builds and patterns a sea shell.</title>
        <authorList>
            <person name="Jackson D.J."/>
            <person name="McDougall C."/>
            <person name="Green K."/>
            <person name="Simpson F."/>
            <person name="Woerheide G."/>
            <person name="Degnan B.M."/>
        </authorList>
    </citation>
    <scope>NUCLEOTIDE SEQUENCE [MRNA]</scope>
    <source>
        <tissue evidence="2">Mantle</tissue>
    </source>
</reference>
<reference evidence="4" key="2">
    <citation type="journal article" date="2010" name="Proteome Sci.">
        <title>Proteomic analysis of the organic matrix of the abalone Haliotis asinina calcified shell.</title>
        <authorList>
            <person name="Marie B."/>
            <person name="Marie A."/>
            <person name="Jackson D.J."/>
            <person name="Dubost L."/>
            <person name="Degnan B.M."/>
            <person name="Milet C."/>
            <person name="Marin F."/>
        </authorList>
    </citation>
    <scope>PROTEIN SEQUENCE OF 159-189</scope>
    <scope>SUBCELLULAR LOCATION</scope>
    <scope>TISSUE SPECIFICITY</scope>
    <source>
        <tissue evidence="3">Shell</tissue>
    </source>
</reference>
<protein>
    <recommendedName>
        <fullName>Uncharacterized protein 6</fullName>
    </recommendedName>
</protein>
<accession>P86725</accession>
<sequence length="209" mass="22913">MGYFPYLAVFVCLLASGDAQWKGLRGSTKASWVRVVSPTLNVTQEAYIWDADSGISFISRSKLLTGTSINRNRAYTDYNQPKIAIKFRKDVGRTCILLDVASALIGTFNETSTNLQALTVLDTTEEKSYQSVGTVLSATSQSAFDLQHPFIQKKCSDRNYNYLATTELTAGAAPPPASDKFTVFTTWGKVHLYILQSTGLVITTTTEAP</sequence>
<evidence type="ECO:0000255" key="1"/>
<evidence type="ECO:0000269" key="2">
    <source>
    </source>
</evidence>
<evidence type="ECO:0000269" key="3">
    <source>
    </source>
</evidence>
<evidence type="ECO:0000305" key="4"/>
<organism>
    <name type="scientific">Haliotis asinina</name>
    <name type="common">Donkey's ear abalone</name>
    <name type="synonym">Ass's ear abalone</name>
    <dbReference type="NCBI Taxonomy" id="109174"/>
    <lineage>
        <taxon>Eukaryota</taxon>
        <taxon>Metazoa</taxon>
        <taxon>Spiralia</taxon>
        <taxon>Lophotrochozoa</taxon>
        <taxon>Mollusca</taxon>
        <taxon>Gastropoda</taxon>
        <taxon>Vetigastropoda</taxon>
        <taxon>Lepetellida</taxon>
        <taxon>Haliotoidea</taxon>
        <taxon>Haliotidae</taxon>
        <taxon>Haliotis</taxon>
    </lineage>
</organism>
<keyword id="KW-0903">Direct protein sequencing</keyword>
<keyword id="KW-0325">Glycoprotein</keyword>
<keyword id="KW-0964">Secreted</keyword>
<keyword id="KW-0732">Signal</keyword>